<dbReference type="EMBL" id="CP000270">
    <property type="protein sequence ID" value="ABE31859.1"/>
    <property type="status" value="ALT_INIT"/>
    <property type="molecule type" value="Genomic_DNA"/>
</dbReference>
<dbReference type="RefSeq" id="WP_011489382.1">
    <property type="nucleotide sequence ID" value="NZ_CP008760.1"/>
</dbReference>
<dbReference type="SMR" id="Q13VN0"/>
<dbReference type="STRING" id="266265.Bxe_A1087"/>
<dbReference type="KEGG" id="bxe:Bxe_A1087"/>
<dbReference type="eggNOG" id="COG1381">
    <property type="taxonomic scope" value="Bacteria"/>
</dbReference>
<dbReference type="OrthoDB" id="9804792at2"/>
<dbReference type="Proteomes" id="UP000001817">
    <property type="component" value="Chromosome 1"/>
</dbReference>
<dbReference type="GO" id="GO:0043590">
    <property type="term" value="C:bacterial nucleoid"/>
    <property type="evidence" value="ECO:0007669"/>
    <property type="project" value="TreeGrafter"/>
</dbReference>
<dbReference type="GO" id="GO:0006310">
    <property type="term" value="P:DNA recombination"/>
    <property type="evidence" value="ECO:0007669"/>
    <property type="project" value="UniProtKB-UniRule"/>
</dbReference>
<dbReference type="GO" id="GO:0006302">
    <property type="term" value="P:double-strand break repair"/>
    <property type="evidence" value="ECO:0007669"/>
    <property type="project" value="TreeGrafter"/>
</dbReference>
<dbReference type="Gene3D" id="2.40.50.140">
    <property type="entry name" value="Nucleic acid-binding proteins"/>
    <property type="match status" value="1"/>
</dbReference>
<dbReference type="Gene3D" id="1.20.1440.120">
    <property type="entry name" value="Recombination protein O, C-terminal domain"/>
    <property type="match status" value="1"/>
</dbReference>
<dbReference type="HAMAP" id="MF_00201">
    <property type="entry name" value="RecO"/>
    <property type="match status" value="1"/>
</dbReference>
<dbReference type="InterPro" id="IPR037278">
    <property type="entry name" value="ARFGAP/RecO"/>
</dbReference>
<dbReference type="InterPro" id="IPR022572">
    <property type="entry name" value="DNA_rep/recomb_RecO_N"/>
</dbReference>
<dbReference type="InterPro" id="IPR012340">
    <property type="entry name" value="NA-bd_OB-fold"/>
</dbReference>
<dbReference type="InterPro" id="IPR003717">
    <property type="entry name" value="RecO"/>
</dbReference>
<dbReference type="InterPro" id="IPR042242">
    <property type="entry name" value="RecO_C"/>
</dbReference>
<dbReference type="NCBIfam" id="TIGR00613">
    <property type="entry name" value="reco"/>
    <property type="match status" value="1"/>
</dbReference>
<dbReference type="PANTHER" id="PTHR33991">
    <property type="entry name" value="DNA REPAIR PROTEIN RECO"/>
    <property type="match status" value="1"/>
</dbReference>
<dbReference type="PANTHER" id="PTHR33991:SF1">
    <property type="entry name" value="DNA REPAIR PROTEIN RECO"/>
    <property type="match status" value="1"/>
</dbReference>
<dbReference type="Pfam" id="PF02565">
    <property type="entry name" value="RecO_C"/>
    <property type="match status" value="1"/>
</dbReference>
<dbReference type="Pfam" id="PF11967">
    <property type="entry name" value="RecO_N"/>
    <property type="match status" value="1"/>
</dbReference>
<dbReference type="SUPFAM" id="SSF57863">
    <property type="entry name" value="ArfGap/RecO-like zinc finger"/>
    <property type="match status" value="1"/>
</dbReference>
<dbReference type="SUPFAM" id="SSF50249">
    <property type="entry name" value="Nucleic acid-binding proteins"/>
    <property type="match status" value="1"/>
</dbReference>
<reference key="1">
    <citation type="journal article" date="2006" name="Proc. Natl. Acad. Sci. U.S.A.">
        <title>Burkholderia xenovorans LB400 harbors a multi-replicon, 9.73-Mbp genome shaped for versatility.</title>
        <authorList>
            <person name="Chain P.S.G."/>
            <person name="Denef V.J."/>
            <person name="Konstantinidis K.T."/>
            <person name="Vergez L.M."/>
            <person name="Agullo L."/>
            <person name="Reyes V.L."/>
            <person name="Hauser L."/>
            <person name="Cordova M."/>
            <person name="Gomez L."/>
            <person name="Gonzalez M."/>
            <person name="Land M."/>
            <person name="Lao V."/>
            <person name="Larimer F."/>
            <person name="LiPuma J.J."/>
            <person name="Mahenthiralingam E."/>
            <person name="Malfatti S.A."/>
            <person name="Marx C.J."/>
            <person name="Parnell J.J."/>
            <person name="Ramette A."/>
            <person name="Richardson P."/>
            <person name="Seeger M."/>
            <person name="Smith D."/>
            <person name="Spilker T."/>
            <person name="Sul W.J."/>
            <person name="Tsoi T.V."/>
            <person name="Ulrich L.E."/>
            <person name="Zhulin I.B."/>
            <person name="Tiedje J.M."/>
        </authorList>
    </citation>
    <scope>NUCLEOTIDE SEQUENCE [LARGE SCALE GENOMIC DNA]</scope>
    <source>
        <strain>LB400</strain>
    </source>
</reference>
<gene>
    <name evidence="1" type="primary">recO</name>
    <name type="ordered locus">Bxeno_A3321</name>
    <name type="ORF">Bxe_A1087</name>
</gene>
<sequence length="299" mass="33059">MTLNSDADPDDPEPAAPARDLSKPASKPARSTRKSSSAKSAQGAEGEPRKTPGRRAPRTPASDYRIAEQPAFVLHSYPYRETSLIIDVLSRDHGRLALVAKGAKRPHSALRGVLQTFQPLALSWSGKSEVRTLTGAEWVGGMLPLTGGALLCGFYVNELLVKFCAREDPHPQLFHHYVVTMTRLAHDEPPVQVLRSFERVLLRETGYAMALDRTVARKAVLAEGRYVFDPERGVREAADDLPAQWPVIAGQTLLDMEQDDYHRAQTVAQSKTLMRFLLNTYLGGTPLATRQILIDLQNL</sequence>
<organism>
    <name type="scientific">Paraburkholderia xenovorans (strain LB400)</name>
    <dbReference type="NCBI Taxonomy" id="266265"/>
    <lineage>
        <taxon>Bacteria</taxon>
        <taxon>Pseudomonadati</taxon>
        <taxon>Pseudomonadota</taxon>
        <taxon>Betaproteobacteria</taxon>
        <taxon>Burkholderiales</taxon>
        <taxon>Burkholderiaceae</taxon>
        <taxon>Paraburkholderia</taxon>
    </lineage>
</organism>
<keyword id="KW-0227">DNA damage</keyword>
<keyword id="KW-0233">DNA recombination</keyword>
<keyword id="KW-0234">DNA repair</keyword>
<keyword id="KW-1185">Reference proteome</keyword>
<feature type="chain" id="PRO_0000264810" description="DNA repair protein RecO">
    <location>
        <begin position="1"/>
        <end position="299"/>
    </location>
</feature>
<feature type="region of interest" description="Disordered" evidence="2">
    <location>
        <begin position="1"/>
        <end position="62"/>
    </location>
</feature>
<feature type="compositionally biased region" description="Low complexity" evidence="2">
    <location>
        <begin position="25"/>
        <end position="41"/>
    </location>
</feature>
<evidence type="ECO:0000255" key="1">
    <source>
        <dbReference type="HAMAP-Rule" id="MF_00201"/>
    </source>
</evidence>
<evidence type="ECO:0000256" key="2">
    <source>
        <dbReference type="SAM" id="MobiDB-lite"/>
    </source>
</evidence>
<evidence type="ECO:0000305" key="3"/>
<protein>
    <recommendedName>
        <fullName evidence="1">DNA repair protein RecO</fullName>
    </recommendedName>
    <alternativeName>
        <fullName evidence="1">Recombination protein O</fullName>
    </alternativeName>
</protein>
<comment type="function">
    <text evidence="1">Involved in DNA repair and RecF pathway recombination.</text>
</comment>
<comment type="similarity">
    <text evidence="1">Belongs to the RecO family.</text>
</comment>
<comment type="sequence caution" evidence="3">
    <conflict type="erroneous initiation">
        <sequence resource="EMBL-CDS" id="ABE31859"/>
    </conflict>
</comment>
<accession>Q13VN0</accession>
<name>RECO_PARXL</name>
<proteinExistence type="inferred from homology"/>